<gene>
    <name type="primary">korA</name>
    <name type="ordered locus">MTH_1033</name>
</gene>
<dbReference type="EC" id="1.2.7.3"/>
<dbReference type="EMBL" id="AE000666">
    <property type="protein sequence ID" value="AAB85529.1"/>
    <property type="status" value="ALT_INIT"/>
    <property type="molecule type" value="Genomic_DNA"/>
</dbReference>
<dbReference type="PIR" id="H69004">
    <property type="entry name" value="H69004"/>
</dbReference>
<dbReference type="SMR" id="O27112"/>
<dbReference type="FunCoup" id="O27112">
    <property type="interactions" value="69"/>
</dbReference>
<dbReference type="STRING" id="187420.MTH_1033"/>
<dbReference type="PaxDb" id="187420-MTH_1033"/>
<dbReference type="EnsemblBacteria" id="AAB85529">
    <property type="protein sequence ID" value="AAB85529"/>
    <property type="gene ID" value="MTH_1033"/>
</dbReference>
<dbReference type="KEGG" id="mth:MTH_1033"/>
<dbReference type="PATRIC" id="fig|187420.15.peg.1016"/>
<dbReference type="HOGENOM" id="CLU_017038_0_1_2"/>
<dbReference type="InParanoid" id="O27112"/>
<dbReference type="Proteomes" id="UP000005223">
    <property type="component" value="Chromosome"/>
</dbReference>
<dbReference type="GO" id="GO:0047553">
    <property type="term" value="F:2-oxoglutarate synthase activity"/>
    <property type="evidence" value="ECO:0007669"/>
    <property type="project" value="UniProtKB-EC"/>
</dbReference>
<dbReference type="GO" id="GO:0006082">
    <property type="term" value="P:organic acid metabolic process"/>
    <property type="evidence" value="ECO:0007669"/>
    <property type="project" value="UniProtKB-ARBA"/>
</dbReference>
<dbReference type="GO" id="GO:0044272">
    <property type="term" value="P:sulfur compound biosynthetic process"/>
    <property type="evidence" value="ECO:0007669"/>
    <property type="project" value="UniProtKB-ARBA"/>
</dbReference>
<dbReference type="CDD" id="cd07034">
    <property type="entry name" value="TPP_PYR_PFOR_IOR-alpha_like"/>
    <property type="match status" value="1"/>
</dbReference>
<dbReference type="FunFam" id="3.40.50.970:FF:000022">
    <property type="entry name" value="2-oxoglutarate ferredoxin oxidoreductase alpha subunit"/>
    <property type="match status" value="1"/>
</dbReference>
<dbReference type="Gene3D" id="3.40.50.920">
    <property type="match status" value="1"/>
</dbReference>
<dbReference type="Gene3D" id="3.40.50.970">
    <property type="match status" value="1"/>
</dbReference>
<dbReference type="InterPro" id="IPR052368">
    <property type="entry name" value="2-oxoacid_oxidoreductase"/>
</dbReference>
<dbReference type="InterPro" id="IPR033412">
    <property type="entry name" value="PFOR_II"/>
</dbReference>
<dbReference type="InterPro" id="IPR002880">
    <property type="entry name" value="Pyrv_Fd/Flavodoxin_OxRdtase_N"/>
</dbReference>
<dbReference type="InterPro" id="IPR029061">
    <property type="entry name" value="THDP-binding"/>
</dbReference>
<dbReference type="InterPro" id="IPR009014">
    <property type="entry name" value="Transketo_C/PFOR_II"/>
</dbReference>
<dbReference type="NCBIfam" id="NF006412">
    <property type="entry name" value="PRK08659.1"/>
    <property type="match status" value="1"/>
</dbReference>
<dbReference type="PANTHER" id="PTHR43088:SF1">
    <property type="entry name" value="SUBUNIT OF PYRUVATE:FLAVODOXIN OXIDOREDUCTASE"/>
    <property type="match status" value="1"/>
</dbReference>
<dbReference type="PANTHER" id="PTHR43088">
    <property type="entry name" value="SUBUNIT OF PYRUVATE:FLAVODOXIN OXIDOREDUCTASE-RELATED"/>
    <property type="match status" value="1"/>
</dbReference>
<dbReference type="Pfam" id="PF17147">
    <property type="entry name" value="PFOR_II"/>
    <property type="match status" value="1"/>
</dbReference>
<dbReference type="Pfam" id="PF01855">
    <property type="entry name" value="POR_N"/>
    <property type="match status" value="1"/>
</dbReference>
<dbReference type="SUPFAM" id="SSF52518">
    <property type="entry name" value="Thiamin diphosphate-binding fold (THDP-binding)"/>
    <property type="match status" value="1"/>
</dbReference>
<dbReference type="SUPFAM" id="SSF52922">
    <property type="entry name" value="TK C-terminal domain-like"/>
    <property type="match status" value="1"/>
</dbReference>
<evidence type="ECO:0000250" key="1"/>
<evidence type="ECO:0000305" key="2"/>
<reference key="1">
    <citation type="journal article" date="1997" name="J. Bacteriol.">
        <title>Complete genome sequence of Methanobacterium thermoautotrophicum deltaH: functional analysis and comparative genomics.</title>
        <authorList>
            <person name="Smith D.R."/>
            <person name="Doucette-Stamm L.A."/>
            <person name="Deloughery C."/>
            <person name="Lee H.-M."/>
            <person name="Dubois J."/>
            <person name="Aldredge T."/>
            <person name="Bashirzadeh R."/>
            <person name="Blakely D."/>
            <person name="Cook R."/>
            <person name="Gilbert K."/>
            <person name="Harrison D."/>
            <person name="Hoang L."/>
            <person name="Keagle P."/>
            <person name="Lumm W."/>
            <person name="Pothier B."/>
            <person name="Qiu D."/>
            <person name="Spadafora R."/>
            <person name="Vicare R."/>
            <person name="Wang Y."/>
            <person name="Wierzbowski J."/>
            <person name="Gibson R."/>
            <person name="Jiwani N."/>
            <person name="Caruso A."/>
            <person name="Bush D."/>
            <person name="Safer H."/>
            <person name="Patwell D."/>
            <person name="Prabhakar S."/>
            <person name="McDougall S."/>
            <person name="Shimer G."/>
            <person name="Goyal A."/>
            <person name="Pietrovski S."/>
            <person name="Church G.M."/>
            <person name="Daniels C.J."/>
            <person name="Mao J.-I."/>
            <person name="Rice P."/>
            <person name="Noelling J."/>
            <person name="Reeve J.N."/>
        </authorList>
    </citation>
    <scope>NUCLEOTIDE SEQUENCE [LARGE SCALE GENOMIC DNA]</scope>
    <source>
        <strain>ATCC 29096 / DSM 1053 / JCM 10044 / NBRC 100330 / Delta H</strain>
    </source>
</reference>
<feature type="initiator methionine" description="Removed" evidence="1">
    <location>
        <position position="1"/>
    </location>
</feature>
<feature type="chain" id="PRO_0000099939" description="2-oxoglutarate synthase subunit KorA">
    <location>
        <begin position="2"/>
        <end position="376"/>
    </location>
</feature>
<sequence>MTEEYFIQGNDACARGAIKAGCRFFAGYPITPSTEIAEEMALLLPREGGVFVQMEDEIGALGAVIGAVWSGVRGMTATSGPGFSLMQEHVGYAAMTETPLVIVNVQRGSPSTGQPTMASQSDMMQARWGSHGDYEIIALSPSSVQECFDFTVRAFNLAEEYRVPVMVMGDEIVGHMREKITIPDRVKIRKRRGPSVPPEEFLPFSAPEDGVPEMPAFGDGYRIPVTGLTHDEGGYPDASNPEGHHRLVKRLCDKILRHRDRISDVQEELTEDAYITVISYGAPSRSVATAVKMAREDGVRAGYLKINTPWPFPETEVRAAAERSGKLLVVEMNLGQMFYEVQRVAAGMAEVELLPKIGGEIHRPEEILNMILKMNR</sequence>
<comment type="catalytic activity">
    <reaction>
        <text>2 oxidized [2Fe-2S]-[ferredoxin] + 2-oxoglutarate + CoA = succinyl-CoA + 2 reduced [2Fe-2S]-[ferredoxin] + CO2 + H(+)</text>
        <dbReference type="Rhea" id="RHEA:17297"/>
        <dbReference type="Rhea" id="RHEA-COMP:10000"/>
        <dbReference type="Rhea" id="RHEA-COMP:10001"/>
        <dbReference type="ChEBI" id="CHEBI:15378"/>
        <dbReference type="ChEBI" id="CHEBI:16526"/>
        <dbReference type="ChEBI" id="CHEBI:16810"/>
        <dbReference type="ChEBI" id="CHEBI:33737"/>
        <dbReference type="ChEBI" id="CHEBI:33738"/>
        <dbReference type="ChEBI" id="CHEBI:57287"/>
        <dbReference type="ChEBI" id="CHEBI:57292"/>
        <dbReference type="EC" id="1.2.7.3"/>
    </reaction>
</comment>
<comment type="subunit">
    <text>Heterotetramer of the KorA, KorB, KorC and KorD subunits.</text>
</comment>
<comment type="sequence caution" evidence="2">
    <conflict type="erroneous initiation">
        <sequence resource="EMBL-CDS" id="AAB85529"/>
    </conflict>
</comment>
<name>KORA_METTH</name>
<proteinExistence type="inferred from homology"/>
<keyword id="KW-0560">Oxidoreductase</keyword>
<keyword id="KW-1185">Reference proteome</keyword>
<organism>
    <name type="scientific">Methanothermobacter thermautotrophicus (strain ATCC 29096 / DSM 1053 / JCM 10044 / NBRC 100330 / Delta H)</name>
    <name type="common">Methanobacterium thermoautotrophicum</name>
    <dbReference type="NCBI Taxonomy" id="187420"/>
    <lineage>
        <taxon>Archaea</taxon>
        <taxon>Methanobacteriati</taxon>
        <taxon>Methanobacteriota</taxon>
        <taxon>Methanomada group</taxon>
        <taxon>Methanobacteria</taxon>
        <taxon>Methanobacteriales</taxon>
        <taxon>Methanobacteriaceae</taxon>
        <taxon>Methanothermobacter</taxon>
    </lineage>
</organism>
<accession>O27112</accession>
<protein>
    <recommendedName>
        <fullName>2-oxoglutarate synthase subunit KorA</fullName>
        <ecNumber>1.2.7.3</ecNumber>
    </recommendedName>
    <alternativeName>
        <fullName>2-ketoglutarate oxidoreductase alpha chain</fullName>
        <shortName>KOR</shortName>
    </alternativeName>
    <alternativeName>
        <fullName>2-oxoglutarate-ferredoxin oxidoreductase subunit alpha</fullName>
    </alternativeName>
</protein>